<feature type="chain" id="PRO_1000093079" description="S-adenosylmethionine synthase">
    <location>
        <begin position="1"/>
        <end position="384"/>
    </location>
</feature>
<feature type="region of interest" description="Flexible loop" evidence="1">
    <location>
        <begin position="99"/>
        <end position="109"/>
    </location>
</feature>
<feature type="binding site" description="in other chain" evidence="1">
    <location>
        <position position="15"/>
    </location>
    <ligand>
        <name>ATP</name>
        <dbReference type="ChEBI" id="CHEBI:30616"/>
        <note>ligand shared between two neighboring subunits</note>
    </ligand>
</feature>
<feature type="binding site" evidence="1">
    <location>
        <position position="17"/>
    </location>
    <ligand>
        <name>Mg(2+)</name>
        <dbReference type="ChEBI" id="CHEBI:18420"/>
    </ligand>
</feature>
<feature type="binding site" evidence="1">
    <location>
        <position position="43"/>
    </location>
    <ligand>
        <name>K(+)</name>
        <dbReference type="ChEBI" id="CHEBI:29103"/>
    </ligand>
</feature>
<feature type="binding site" description="in other chain" evidence="1">
    <location>
        <position position="56"/>
    </location>
    <ligand>
        <name>L-methionine</name>
        <dbReference type="ChEBI" id="CHEBI:57844"/>
        <note>ligand shared between two neighboring subunits</note>
    </ligand>
</feature>
<feature type="binding site" description="in other chain" evidence="1">
    <location>
        <position position="99"/>
    </location>
    <ligand>
        <name>L-methionine</name>
        <dbReference type="ChEBI" id="CHEBI:57844"/>
        <note>ligand shared between two neighboring subunits</note>
    </ligand>
</feature>
<feature type="binding site" description="in other chain" evidence="1">
    <location>
        <begin position="164"/>
        <end position="166"/>
    </location>
    <ligand>
        <name>ATP</name>
        <dbReference type="ChEBI" id="CHEBI:30616"/>
        <note>ligand shared between two neighboring subunits</note>
    </ligand>
</feature>
<feature type="binding site" description="in other chain" evidence="1">
    <location>
        <begin position="230"/>
        <end position="231"/>
    </location>
    <ligand>
        <name>ATP</name>
        <dbReference type="ChEBI" id="CHEBI:30616"/>
        <note>ligand shared between two neighboring subunits</note>
    </ligand>
</feature>
<feature type="binding site" evidence="1">
    <location>
        <position position="239"/>
    </location>
    <ligand>
        <name>ATP</name>
        <dbReference type="ChEBI" id="CHEBI:30616"/>
        <note>ligand shared between two neighboring subunits</note>
    </ligand>
</feature>
<feature type="binding site" evidence="1">
    <location>
        <position position="239"/>
    </location>
    <ligand>
        <name>L-methionine</name>
        <dbReference type="ChEBI" id="CHEBI:57844"/>
        <note>ligand shared between two neighboring subunits</note>
    </ligand>
</feature>
<feature type="binding site" description="in other chain" evidence="1">
    <location>
        <begin position="245"/>
        <end position="246"/>
    </location>
    <ligand>
        <name>ATP</name>
        <dbReference type="ChEBI" id="CHEBI:30616"/>
        <note>ligand shared between two neighboring subunits</note>
    </ligand>
</feature>
<feature type="binding site" evidence="1">
    <location>
        <position position="262"/>
    </location>
    <ligand>
        <name>ATP</name>
        <dbReference type="ChEBI" id="CHEBI:30616"/>
        <note>ligand shared between two neighboring subunits</note>
    </ligand>
</feature>
<feature type="binding site" evidence="1">
    <location>
        <position position="266"/>
    </location>
    <ligand>
        <name>ATP</name>
        <dbReference type="ChEBI" id="CHEBI:30616"/>
        <note>ligand shared between two neighboring subunits</note>
    </ligand>
</feature>
<feature type="binding site" description="in other chain" evidence="1">
    <location>
        <position position="270"/>
    </location>
    <ligand>
        <name>L-methionine</name>
        <dbReference type="ChEBI" id="CHEBI:57844"/>
        <note>ligand shared between two neighboring subunits</note>
    </ligand>
</feature>
<protein>
    <recommendedName>
        <fullName evidence="1">S-adenosylmethionine synthase</fullName>
        <shortName evidence="1">AdoMet synthase</shortName>
        <ecNumber evidence="1">2.5.1.6</ecNumber>
    </recommendedName>
    <alternativeName>
        <fullName evidence="1">MAT</fullName>
    </alternativeName>
    <alternativeName>
        <fullName evidence="1">Methionine adenosyltransferase</fullName>
    </alternativeName>
</protein>
<reference key="1">
    <citation type="journal article" date="2008" name="Genome Res.">
        <title>Comparative genome analysis of Salmonella enteritidis PT4 and Salmonella gallinarum 287/91 provides insights into evolutionary and host adaptation pathways.</title>
        <authorList>
            <person name="Thomson N.R."/>
            <person name="Clayton D.J."/>
            <person name="Windhorst D."/>
            <person name="Vernikos G."/>
            <person name="Davidson S."/>
            <person name="Churcher C."/>
            <person name="Quail M.A."/>
            <person name="Stevens M."/>
            <person name="Jones M.A."/>
            <person name="Watson M."/>
            <person name="Barron A."/>
            <person name="Layton A."/>
            <person name="Pickard D."/>
            <person name="Kingsley R.A."/>
            <person name="Bignell A."/>
            <person name="Clark L."/>
            <person name="Harris B."/>
            <person name="Ormond D."/>
            <person name="Abdellah Z."/>
            <person name="Brooks K."/>
            <person name="Cherevach I."/>
            <person name="Chillingworth T."/>
            <person name="Woodward J."/>
            <person name="Norberczak H."/>
            <person name="Lord A."/>
            <person name="Arrowsmith C."/>
            <person name="Jagels K."/>
            <person name="Moule S."/>
            <person name="Mungall K."/>
            <person name="Saunders M."/>
            <person name="Whitehead S."/>
            <person name="Chabalgoity J.A."/>
            <person name="Maskell D."/>
            <person name="Humphreys T."/>
            <person name="Roberts M."/>
            <person name="Barrow P.A."/>
            <person name="Dougan G."/>
            <person name="Parkhill J."/>
        </authorList>
    </citation>
    <scope>NUCLEOTIDE SEQUENCE [LARGE SCALE GENOMIC DNA]</scope>
    <source>
        <strain>P125109</strain>
    </source>
</reference>
<name>METK_SALEP</name>
<keyword id="KW-0067">ATP-binding</keyword>
<keyword id="KW-0963">Cytoplasm</keyword>
<keyword id="KW-0460">Magnesium</keyword>
<keyword id="KW-0479">Metal-binding</keyword>
<keyword id="KW-0547">Nucleotide-binding</keyword>
<keyword id="KW-0554">One-carbon metabolism</keyword>
<keyword id="KW-0630">Potassium</keyword>
<keyword id="KW-0808">Transferase</keyword>
<dbReference type="EC" id="2.5.1.6" evidence="1"/>
<dbReference type="EMBL" id="AM933172">
    <property type="protein sequence ID" value="CAR34510.1"/>
    <property type="molecule type" value="Genomic_DNA"/>
</dbReference>
<dbReference type="RefSeq" id="WP_001062140.1">
    <property type="nucleotide sequence ID" value="NC_011294.1"/>
</dbReference>
<dbReference type="SMR" id="B5QY66"/>
<dbReference type="KEGG" id="set:SEN2933"/>
<dbReference type="HOGENOM" id="CLU_041802_1_1_6"/>
<dbReference type="UniPathway" id="UPA00315">
    <property type="reaction ID" value="UER00080"/>
</dbReference>
<dbReference type="Proteomes" id="UP000000613">
    <property type="component" value="Chromosome"/>
</dbReference>
<dbReference type="GO" id="GO:0005737">
    <property type="term" value="C:cytoplasm"/>
    <property type="evidence" value="ECO:0007669"/>
    <property type="project" value="UniProtKB-SubCell"/>
</dbReference>
<dbReference type="GO" id="GO:0005524">
    <property type="term" value="F:ATP binding"/>
    <property type="evidence" value="ECO:0007669"/>
    <property type="project" value="UniProtKB-UniRule"/>
</dbReference>
<dbReference type="GO" id="GO:0000287">
    <property type="term" value="F:magnesium ion binding"/>
    <property type="evidence" value="ECO:0007669"/>
    <property type="project" value="UniProtKB-UniRule"/>
</dbReference>
<dbReference type="GO" id="GO:0004478">
    <property type="term" value="F:methionine adenosyltransferase activity"/>
    <property type="evidence" value="ECO:0007669"/>
    <property type="project" value="UniProtKB-UniRule"/>
</dbReference>
<dbReference type="GO" id="GO:0006730">
    <property type="term" value="P:one-carbon metabolic process"/>
    <property type="evidence" value="ECO:0007669"/>
    <property type="project" value="UniProtKB-KW"/>
</dbReference>
<dbReference type="GO" id="GO:0006556">
    <property type="term" value="P:S-adenosylmethionine biosynthetic process"/>
    <property type="evidence" value="ECO:0007669"/>
    <property type="project" value="UniProtKB-UniRule"/>
</dbReference>
<dbReference type="CDD" id="cd18079">
    <property type="entry name" value="S-AdoMet_synt"/>
    <property type="match status" value="1"/>
</dbReference>
<dbReference type="FunFam" id="3.30.300.10:FF:000001">
    <property type="entry name" value="S-adenosylmethionine synthase"/>
    <property type="match status" value="1"/>
</dbReference>
<dbReference type="FunFam" id="3.30.300.10:FF:000003">
    <property type="entry name" value="S-adenosylmethionine synthase"/>
    <property type="match status" value="1"/>
</dbReference>
<dbReference type="Gene3D" id="3.30.300.10">
    <property type="match status" value="3"/>
</dbReference>
<dbReference type="HAMAP" id="MF_00086">
    <property type="entry name" value="S_AdoMet_synth1"/>
    <property type="match status" value="1"/>
</dbReference>
<dbReference type="InterPro" id="IPR022631">
    <property type="entry name" value="ADOMET_SYNTHASE_CS"/>
</dbReference>
<dbReference type="InterPro" id="IPR022630">
    <property type="entry name" value="S-AdoMet_synt_C"/>
</dbReference>
<dbReference type="InterPro" id="IPR022629">
    <property type="entry name" value="S-AdoMet_synt_central"/>
</dbReference>
<dbReference type="InterPro" id="IPR022628">
    <property type="entry name" value="S-AdoMet_synt_N"/>
</dbReference>
<dbReference type="InterPro" id="IPR002133">
    <property type="entry name" value="S-AdoMet_synthetase"/>
</dbReference>
<dbReference type="InterPro" id="IPR022636">
    <property type="entry name" value="S-AdoMet_synthetase_sfam"/>
</dbReference>
<dbReference type="NCBIfam" id="TIGR01034">
    <property type="entry name" value="metK"/>
    <property type="match status" value="1"/>
</dbReference>
<dbReference type="PANTHER" id="PTHR11964">
    <property type="entry name" value="S-ADENOSYLMETHIONINE SYNTHETASE"/>
    <property type="match status" value="1"/>
</dbReference>
<dbReference type="Pfam" id="PF02773">
    <property type="entry name" value="S-AdoMet_synt_C"/>
    <property type="match status" value="1"/>
</dbReference>
<dbReference type="Pfam" id="PF02772">
    <property type="entry name" value="S-AdoMet_synt_M"/>
    <property type="match status" value="1"/>
</dbReference>
<dbReference type="Pfam" id="PF00438">
    <property type="entry name" value="S-AdoMet_synt_N"/>
    <property type="match status" value="1"/>
</dbReference>
<dbReference type="PIRSF" id="PIRSF000497">
    <property type="entry name" value="MAT"/>
    <property type="match status" value="1"/>
</dbReference>
<dbReference type="SUPFAM" id="SSF55973">
    <property type="entry name" value="S-adenosylmethionine synthetase"/>
    <property type="match status" value="3"/>
</dbReference>
<dbReference type="PROSITE" id="PS00376">
    <property type="entry name" value="ADOMET_SYNTHASE_1"/>
    <property type="match status" value="1"/>
</dbReference>
<dbReference type="PROSITE" id="PS00377">
    <property type="entry name" value="ADOMET_SYNTHASE_2"/>
    <property type="match status" value="1"/>
</dbReference>
<comment type="function">
    <text evidence="1">Catalyzes the formation of S-adenosylmethionine (AdoMet) from methionine and ATP. The overall synthetic reaction is composed of two sequential steps, AdoMet formation and the subsequent tripolyphosphate hydrolysis which occurs prior to release of AdoMet from the enzyme.</text>
</comment>
<comment type="catalytic activity">
    <reaction evidence="1">
        <text>L-methionine + ATP + H2O = S-adenosyl-L-methionine + phosphate + diphosphate</text>
        <dbReference type="Rhea" id="RHEA:21080"/>
        <dbReference type="ChEBI" id="CHEBI:15377"/>
        <dbReference type="ChEBI" id="CHEBI:30616"/>
        <dbReference type="ChEBI" id="CHEBI:33019"/>
        <dbReference type="ChEBI" id="CHEBI:43474"/>
        <dbReference type="ChEBI" id="CHEBI:57844"/>
        <dbReference type="ChEBI" id="CHEBI:59789"/>
        <dbReference type="EC" id="2.5.1.6"/>
    </reaction>
</comment>
<comment type="cofactor">
    <cofactor evidence="1">
        <name>Mg(2+)</name>
        <dbReference type="ChEBI" id="CHEBI:18420"/>
    </cofactor>
    <text evidence="1">Binds 2 divalent ions per subunit.</text>
</comment>
<comment type="cofactor">
    <cofactor evidence="1">
        <name>K(+)</name>
        <dbReference type="ChEBI" id="CHEBI:29103"/>
    </cofactor>
    <text evidence="1">Binds 1 potassium ion per subunit.</text>
</comment>
<comment type="pathway">
    <text evidence="1">Amino-acid biosynthesis; S-adenosyl-L-methionine biosynthesis; S-adenosyl-L-methionine from L-methionine: step 1/1.</text>
</comment>
<comment type="subunit">
    <text evidence="1">Homotetramer; dimer of dimers.</text>
</comment>
<comment type="subcellular location">
    <subcellularLocation>
        <location evidence="1">Cytoplasm</location>
    </subcellularLocation>
</comment>
<comment type="similarity">
    <text evidence="1">Belongs to the AdoMet synthase family.</text>
</comment>
<evidence type="ECO:0000255" key="1">
    <source>
        <dbReference type="HAMAP-Rule" id="MF_00086"/>
    </source>
</evidence>
<proteinExistence type="inferred from homology"/>
<gene>
    <name evidence="1" type="primary">metK</name>
    <name type="ordered locus">SEN2933</name>
</gene>
<organism>
    <name type="scientific">Salmonella enteritidis PT4 (strain P125109)</name>
    <dbReference type="NCBI Taxonomy" id="550537"/>
    <lineage>
        <taxon>Bacteria</taxon>
        <taxon>Pseudomonadati</taxon>
        <taxon>Pseudomonadota</taxon>
        <taxon>Gammaproteobacteria</taxon>
        <taxon>Enterobacterales</taxon>
        <taxon>Enterobacteriaceae</taxon>
        <taxon>Salmonella</taxon>
    </lineage>
</organism>
<sequence>MAKHLFTSESVSEGHPDKIADQISDAVLDAILQQDPKARVACETYVKTGMVLVGGEITTSAWVDIEEITRNTVREIGYVHSDMGFDANSCAVLSAIGKQSPDINQGVDRADPLEQGAGDQGLMFGYATNETDVLMPAPITYAHRLVQRQAEVRKNGTLPWLRPDAKSQVTFQYDDGKIVGIDAVVLSTQHAEDIDQKSLQEAVMEEIIKPILPSEWLNTSTKFFINPTGRFVIGGPMGDCGLTGRKIIVDTYGGMARHGGGAFSGKDPSKVDRSAAYAARYVAKNIVAAGLADRCEIQVSYAIGVAEPTSIMVETFGTEKVPAEQLILLVREFFDLRPYGLIQMLDLLHPIYKETAAYGHFGRENFPWEKTDKAQLLRDAAGLK</sequence>
<accession>B5QY66</accession>